<comment type="function">
    <text evidence="1 2 3 4">Core component of RNA polymerase II (Pol II), a DNA-dependent RNA polymerase which synthesizes mRNA precursors and many functional non-coding RNAs using the four ribonucleoside triphosphates as substrates. Pol II is the central component of the basal RNA polymerase II transcription machinery. It is composed of mobile elements that move relative to each other. POLR2D/RPB4 is part of a subcomplex with POLR2G/RPB7 that binds to a pocket formed by POLR2A/RPB1, POLR2B/RPB2 and POLR2F/RPABC2 at the base of the clamp element. The POLR2D/RPB4-POLR2G/RPB7 subcomplex seems to lock the clamp via POLR2G/RPB7 in the closed conformation thus preventing double-stranded DNA to enter the active site cleft. The POLR2D/RPB4-POLR2G/RPB7 subcomplex binds single-stranded DNA and RNA.</text>
</comment>
<comment type="subunit">
    <text evidence="3 4 5">Component of the RNA polymerase II (Pol II) core complex consisting of 12 subunits: a ten-subunit catalytic core composed of POLR2A/RPB1, POLR2B/RPB2, POLR2C/RPB3, POLR2I/RPB9, POLR2J/RPB11, POLR2E/RPABC1, POLR2F/RPABC2, POLR2H/RPABC3, POLR2K/RPABC4 and POLR2L/RPABC5 and a mobile stalk composed of two subunits POLR2D/RPB4 and POLR2G/RPB7, protruding from the core and functioning primarily in transcription initiation. Part of Pol II(G) complex, in which Pol II core associates with an additional subunit POLR2M; unlike conventional Pol II, Pol II(G) functions as a transcriptional repressor. Part of Pol II pre-initiation complex (PIC), in which Pol II core assembles with Mediator, general transcription factors and other specific initiation factors including GTF2E1, GTF2E2, GTF2F1, GTF2F2, TCEA1, ERCC2, ERCC3, GTF2H2, GTF2H3, GTF2H4, GTF2H5, GTF2A1, GTF2A2, GTF2B and TBP; this large multi-subunit PIC complex mediates DNA unwinding and targets Pol II core to the transcription start site where the first phosphodiester bond forms.</text>
</comment>
<comment type="subcellular location">
    <subcellularLocation>
        <location evidence="1">Nucleus</location>
    </subcellularLocation>
</comment>
<comment type="similarity">
    <text evidence="6">Belongs to the eukaryotic RPB4 RNA polymerase subunit family.</text>
</comment>
<accession>Q1JQ91</accession>
<sequence length="142" mass="16327">MAAGGSDPRSGDVEEDASQLIFPKEFETAETLLNSEVHMLLEHRKQQNESAEDEQELSEVFMKTLNYTARFSRFKNRETIASVRSLLLQKKLHKFELACLANLCPETAEESKALIPSLEGRFEDEELQQILDDIQTKRSFQY</sequence>
<organism>
    <name type="scientific">Bos taurus</name>
    <name type="common">Bovine</name>
    <dbReference type="NCBI Taxonomy" id="9913"/>
    <lineage>
        <taxon>Eukaryota</taxon>
        <taxon>Metazoa</taxon>
        <taxon>Chordata</taxon>
        <taxon>Craniata</taxon>
        <taxon>Vertebrata</taxon>
        <taxon>Euteleostomi</taxon>
        <taxon>Mammalia</taxon>
        <taxon>Eutheria</taxon>
        <taxon>Laurasiatheria</taxon>
        <taxon>Artiodactyla</taxon>
        <taxon>Ruminantia</taxon>
        <taxon>Pecora</taxon>
        <taxon>Bovidae</taxon>
        <taxon>Bovinae</taxon>
        <taxon>Bos</taxon>
    </lineage>
</organism>
<evidence type="ECO:0000250" key="1">
    <source>
        <dbReference type="UniProtKB" id="O15514"/>
    </source>
</evidence>
<evidence type="ECO:0000250" key="2">
    <source>
        <dbReference type="UniProtKB" id="P20433"/>
    </source>
</evidence>
<evidence type="ECO:0000269" key="3">
    <source>
    </source>
</evidence>
<evidence type="ECO:0000269" key="4">
    <source>
    </source>
</evidence>
<evidence type="ECO:0000269" key="5">
    <source>
    </source>
</evidence>
<evidence type="ECO:0000305" key="6"/>
<evidence type="ECO:0007829" key="7">
    <source>
        <dbReference type="PDB" id="5FLM"/>
    </source>
</evidence>
<feature type="chain" id="PRO_0000459631" description="DNA-directed RNA polymerase II subunit RPB4">
    <location>
        <begin position="1"/>
        <end position="142"/>
    </location>
</feature>
<feature type="turn" evidence="7">
    <location>
        <begin position="17"/>
        <end position="20"/>
    </location>
</feature>
<feature type="strand" evidence="7">
    <location>
        <begin position="26"/>
        <end position="28"/>
    </location>
</feature>
<feature type="helix" evidence="7">
    <location>
        <begin position="34"/>
        <end position="49"/>
    </location>
</feature>
<feature type="helix" evidence="7">
    <location>
        <begin position="59"/>
        <end position="70"/>
    </location>
</feature>
<feature type="helix" evidence="7">
    <location>
        <begin position="77"/>
        <end position="89"/>
    </location>
</feature>
<feature type="helix" evidence="7">
    <location>
        <begin position="94"/>
        <end position="103"/>
    </location>
</feature>
<feature type="helix" evidence="7">
    <location>
        <begin position="108"/>
        <end position="114"/>
    </location>
</feature>
<feature type="helix" evidence="7">
    <location>
        <begin position="116"/>
        <end position="118"/>
    </location>
</feature>
<feature type="turn" evidence="7">
    <location>
        <begin position="119"/>
        <end position="121"/>
    </location>
</feature>
<feature type="helix" evidence="7">
    <location>
        <begin position="124"/>
        <end position="137"/>
    </location>
</feature>
<protein>
    <recommendedName>
        <fullName>DNA-directed RNA polymerase II subunit RPB4</fullName>
        <shortName>RNA polymerase II subunit B4</shortName>
    </recommendedName>
    <alternativeName>
        <fullName>DNA-directed RNA polymerase II subunit D</fullName>
    </alternativeName>
</protein>
<reference key="1">
    <citation type="submission" date="2018-03" db="EMBL/GenBank/DDBJ databases">
        <title>ARS-UCD1.2.</title>
        <authorList>
            <person name="Rosen B.D."/>
            <person name="Bickhart D.M."/>
            <person name="Koren S."/>
            <person name="Schnabel R.D."/>
            <person name="Hall R."/>
            <person name="Zimin A."/>
            <person name="Dreischer C."/>
            <person name="Schultheiss S."/>
            <person name="Schroeder S.G."/>
            <person name="Elsik C.G."/>
            <person name="Couldrey C."/>
            <person name="Liu G.E."/>
            <person name="Van Tassell C.P."/>
            <person name="Phillippy A.M."/>
            <person name="Smith T.P.L."/>
            <person name="Medrano J.F."/>
        </authorList>
    </citation>
    <scope>NUCLEOTIDE SEQUENCE [LARGE SCALE GENOMIC DNA]</scope>
    <source>
        <strain>Hereford</strain>
    </source>
</reference>
<reference key="2">
    <citation type="submission" date="2005-08" db="EMBL/GenBank/DDBJ databases">
        <authorList>
            <consortium name="NIH - Mammalian Gene Collection (MGC) project"/>
        </authorList>
    </citation>
    <scope>NUCLEOTIDE SEQUENCE [LARGE SCALE MRNA]</scope>
    <source>
        <strain>Crossbred X Angus</strain>
        <tissue>Ileum</tissue>
    </source>
</reference>
<reference key="3">
    <citation type="journal article" date="2006" name="Proc. Natl. Acad. Sci. U.S.A.">
        <title>A Mediator-responsive form of metazoan RNA polymerase II.</title>
        <authorList>
            <person name="Hu X."/>
            <person name="Malik S."/>
            <person name="Negroiu C.C."/>
            <person name="Hubbard K."/>
            <person name="Velalar C.N."/>
            <person name="Hampton B."/>
            <person name="Grosu D."/>
            <person name="Catalano J."/>
            <person name="Roeder R.G."/>
            <person name="Gnatt A."/>
        </authorList>
    </citation>
    <scope>FUNCTION OF POL II</scope>
    <scope>SUBUNIT</scope>
    <scope>IDENTIFICATION IN POL II AND POL II(G) COMPLEXES</scope>
</reference>
<reference key="4">
    <citation type="journal article" date="2016" name="Nature">
        <title>Structure of transcribing mammalian RNA polymerase II.</title>
        <authorList>
            <person name="Bernecky C."/>
            <person name="Herzog F."/>
            <person name="Baumeister W."/>
            <person name="Plitzko J.M."/>
            <person name="Cramer P."/>
        </authorList>
    </citation>
    <scope>STRUCTURE BY ELECTRON MICROSCOPY (3.40 ANGSTROMS)</scope>
    <scope>FUNCTION OF POL II</scope>
    <scope>SUBUNIT</scope>
</reference>
<reference key="5">
    <citation type="journal article" date="2017" name="Nat. Struct. Mol. Biol.">
        <title>Structure of a transcribing RNA polymerase II-DSIF complex reveals a multidentate DNA-RNA clamp.</title>
        <authorList>
            <person name="Bernecky C."/>
            <person name="Plitzko J.M."/>
            <person name="Cramer P."/>
        </authorList>
    </citation>
    <scope>STRUCTURE BY ELECTRON MICROSCOPY (3.70 ANGSTROMS)</scope>
    <scope>SUBUNIT</scope>
</reference>
<dbReference type="EMBL" id="BC116155">
    <property type="protein sequence ID" value="AAI16156.1"/>
    <property type="molecule type" value="mRNA"/>
</dbReference>
<dbReference type="RefSeq" id="NP_001069926.1">
    <property type="nucleotide sequence ID" value="NM_001076458.2"/>
</dbReference>
<dbReference type="PDB" id="5FLM">
    <property type="method" value="EM"/>
    <property type="resolution" value="3.40 A"/>
    <property type="chains" value="D=1-142"/>
</dbReference>
<dbReference type="PDB" id="5OIK">
    <property type="method" value="EM"/>
    <property type="resolution" value="3.70 A"/>
    <property type="chains" value="D=1-142"/>
</dbReference>
<dbReference type="PDBsum" id="5FLM"/>
<dbReference type="PDBsum" id="5OIK"/>
<dbReference type="EMDB" id="EMD-3817"/>
<dbReference type="SMR" id="Q1JQ91"/>
<dbReference type="DIP" id="DIP-61189N"/>
<dbReference type="FunCoup" id="Q1JQ91">
    <property type="interactions" value="4519"/>
</dbReference>
<dbReference type="IntAct" id="Q1JQ91">
    <property type="interactions" value="3"/>
</dbReference>
<dbReference type="STRING" id="9913.ENSBTAP00000013496"/>
<dbReference type="PaxDb" id="9913-ENSBTAP00000013496"/>
<dbReference type="Ensembl" id="ENSBTAT00000101989.1">
    <property type="protein sequence ID" value="ENSBTAP00000085798.1"/>
    <property type="gene ID" value="ENSBTAG00000061032.1"/>
</dbReference>
<dbReference type="GeneID" id="617422"/>
<dbReference type="KEGG" id="bta:617422"/>
<dbReference type="CTD" id="5433"/>
<dbReference type="VEuPathDB" id="HostDB:ENSBTAG00000053244"/>
<dbReference type="eggNOG" id="KOG2351">
    <property type="taxonomic scope" value="Eukaryota"/>
</dbReference>
<dbReference type="GeneTree" id="ENSGT00390000004912"/>
<dbReference type="HOGENOM" id="CLU_110332_2_1_1"/>
<dbReference type="OMA" id="HRKTQNE"/>
<dbReference type="OrthoDB" id="2186918at2759"/>
<dbReference type="TreeFam" id="TF103039"/>
<dbReference type="Reactome" id="R-BTA-112382">
    <property type="pathway name" value="Formation of RNA Pol II elongation complex"/>
</dbReference>
<dbReference type="Reactome" id="R-BTA-113418">
    <property type="pathway name" value="Formation of the Early Elongation Complex"/>
</dbReference>
<dbReference type="Reactome" id="R-BTA-5578749">
    <property type="pathway name" value="Transcriptional regulation by small RNAs"/>
</dbReference>
<dbReference type="Reactome" id="R-BTA-674695">
    <property type="pathway name" value="RNA Polymerase II Pre-transcription Events"/>
</dbReference>
<dbReference type="Reactome" id="R-BTA-6781823">
    <property type="pathway name" value="Formation of TC-NER Pre-Incision Complex"/>
</dbReference>
<dbReference type="Reactome" id="R-BTA-6782135">
    <property type="pathway name" value="Dual incision in TC-NER"/>
</dbReference>
<dbReference type="Reactome" id="R-BTA-6782210">
    <property type="pathway name" value="Gap-filling DNA repair synthesis and ligation in TC-NER"/>
</dbReference>
<dbReference type="Reactome" id="R-BTA-6796648">
    <property type="pathway name" value="TP53 Regulates Transcription of DNA Repair Genes"/>
</dbReference>
<dbReference type="Reactome" id="R-BTA-6803529">
    <property type="pathway name" value="FGFR2 alternative splicing"/>
</dbReference>
<dbReference type="Reactome" id="R-BTA-6807505">
    <property type="pathway name" value="RNA polymerase II transcribes snRNA genes"/>
</dbReference>
<dbReference type="Reactome" id="R-BTA-72086">
    <property type="pathway name" value="mRNA Capping"/>
</dbReference>
<dbReference type="Reactome" id="R-BTA-72163">
    <property type="pathway name" value="mRNA Splicing - Major Pathway"/>
</dbReference>
<dbReference type="Reactome" id="R-BTA-72165">
    <property type="pathway name" value="mRNA Splicing - Minor Pathway"/>
</dbReference>
<dbReference type="Reactome" id="R-BTA-72203">
    <property type="pathway name" value="Processing of Capped Intron-Containing Pre-mRNA"/>
</dbReference>
<dbReference type="Reactome" id="R-BTA-73776">
    <property type="pathway name" value="RNA Polymerase II Promoter Escape"/>
</dbReference>
<dbReference type="Reactome" id="R-BTA-73779">
    <property type="pathway name" value="RNA Polymerase II Transcription Pre-Initiation And Promoter Opening"/>
</dbReference>
<dbReference type="Reactome" id="R-BTA-75953">
    <property type="pathway name" value="RNA Polymerase II Transcription Initiation"/>
</dbReference>
<dbReference type="Reactome" id="R-BTA-75955">
    <property type="pathway name" value="RNA Polymerase II Transcription Elongation"/>
</dbReference>
<dbReference type="Reactome" id="R-BTA-76042">
    <property type="pathway name" value="RNA Polymerase II Transcription Initiation And Promoter Clearance"/>
</dbReference>
<dbReference type="Reactome" id="R-BTA-77075">
    <property type="pathway name" value="RNA Pol II CTD phosphorylation and interaction with CE"/>
</dbReference>
<dbReference type="Reactome" id="R-BTA-9018519">
    <property type="pathway name" value="Estrogen-dependent gene expression"/>
</dbReference>
<dbReference type="EvolutionaryTrace" id="Q1JQ91"/>
<dbReference type="Proteomes" id="UP000009136">
    <property type="component" value="Chromosome 2"/>
</dbReference>
<dbReference type="Bgee" id="ENSBTAG00000053244">
    <property type="expression patterns" value="Expressed in oocyte and 105 other cell types or tissues"/>
</dbReference>
<dbReference type="GO" id="GO:0005665">
    <property type="term" value="C:RNA polymerase II, core complex"/>
    <property type="evidence" value="ECO:0000314"/>
    <property type="project" value="UniProtKB"/>
</dbReference>
<dbReference type="GO" id="GO:0000166">
    <property type="term" value="F:nucleotide binding"/>
    <property type="evidence" value="ECO:0007669"/>
    <property type="project" value="InterPro"/>
</dbReference>
<dbReference type="GO" id="GO:0031369">
    <property type="term" value="F:translation initiation factor binding"/>
    <property type="evidence" value="ECO:0000318"/>
    <property type="project" value="GO_Central"/>
</dbReference>
<dbReference type="GO" id="GO:0006367">
    <property type="term" value="P:transcription initiation at RNA polymerase II promoter"/>
    <property type="evidence" value="ECO:0000318"/>
    <property type="project" value="GO_Central"/>
</dbReference>
<dbReference type="FunFam" id="1.20.1250.40:FF:000001">
    <property type="entry name" value="DNA-directed RNA polymerase II subunit RPB4"/>
    <property type="match status" value="1"/>
</dbReference>
<dbReference type="Gene3D" id="1.20.1250.40">
    <property type="match status" value="1"/>
</dbReference>
<dbReference type="InterPro" id="IPR010997">
    <property type="entry name" value="HRDC-like_sf"/>
</dbReference>
<dbReference type="InterPro" id="IPR006590">
    <property type="entry name" value="RNA_pol_Rpb4/RPC9_core"/>
</dbReference>
<dbReference type="InterPro" id="IPR045222">
    <property type="entry name" value="Rpb4-like"/>
</dbReference>
<dbReference type="InterPro" id="IPR005574">
    <property type="entry name" value="Rpb4/RPC9"/>
</dbReference>
<dbReference type="InterPro" id="IPR038324">
    <property type="entry name" value="Rpb4/RPC9_sf"/>
</dbReference>
<dbReference type="PANTHER" id="PTHR21297">
    <property type="entry name" value="DNA-DIRECTED RNA POLYMERASE II"/>
    <property type="match status" value="1"/>
</dbReference>
<dbReference type="Pfam" id="PF03874">
    <property type="entry name" value="RNA_pol_Rpb4"/>
    <property type="match status" value="1"/>
</dbReference>
<dbReference type="SMART" id="SM00657">
    <property type="entry name" value="RPOL4c"/>
    <property type="match status" value="1"/>
</dbReference>
<dbReference type="SUPFAM" id="SSF47819">
    <property type="entry name" value="HRDC-like"/>
    <property type="match status" value="1"/>
</dbReference>
<gene>
    <name type="primary">POLR2D</name>
</gene>
<keyword id="KW-0002">3D-structure</keyword>
<keyword id="KW-0240">DNA-directed RNA polymerase</keyword>
<keyword id="KW-0539">Nucleus</keyword>
<keyword id="KW-1185">Reference proteome</keyword>
<keyword id="KW-0804">Transcription</keyword>
<proteinExistence type="evidence at protein level"/>
<name>RPB4_BOVIN</name>